<protein>
    <recommendedName>
        <fullName>S-layer protein</fullName>
    </recommendedName>
    <alternativeName>
        <fullName>Surface layer protein</fullName>
    </alternativeName>
</protein>
<comment type="function">
    <text>The S-layer is a paracrystalline mono-layered assembly of proteins which coat the surface of bacteria.</text>
</comment>
<comment type="subcellular location">
    <subcellularLocation>
        <location>Secreted</location>
        <location>Cell wall</location>
        <location>S-layer</location>
    </subcellularLocation>
</comment>
<reference key="1">
    <citation type="journal article" date="1996" name="Gene">
        <title>The complete nucleotide sequence of the Bacillus licheniformis NM105 S-layer-encoding gene.</title>
        <authorList>
            <person name="Zhu X."/>
            <person name="McVeigh R.R."/>
            <person name="Malathi P."/>
            <person name="Ghosh B.K."/>
        </authorList>
    </citation>
    <scope>NUCLEOTIDE SEQUENCE [GENOMIC DNA]</scope>
    <source>
        <strain>NM 105</strain>
    </source>
</reference>
<dbReference type="EMBL" id="U38842">
    <property type="protein sequence ID" value="AAC44405.1"/>
    <property type="molecule type" value="Genomic_DNA"/>
</dbReference>
<dbReference type="PIR" id="JC4930">
    <property type="entry name" value="JC4930"/>
</dbReference>
<dbReference type="SMR" id="P49052"/>
<dbReference type="GO" id="GO:0005576">
    <property type="term" value="C:extracellular region"/>
    <property type="evidence" value="ECO:0007669"/>
    <property type="project" value="UniProtKB-KW"/>
</dbReference>
<dbReference type="GO" id="GO:0030115">
    <property type="term" value="C:S-layer"/>
    <property type="evidence" value="ECO:0007669"/>
    <property type="project" value="UniProtKB-SubCell"/>
</dbReference>
<dbReference type="Gene3D" id="2.60.40.1080">
    <property type="match status" value="1"/>
</dbReference>
<dbReference type="InterPro" id="IPR051465">
    <property type="entry name" value="Cell_Envelope_Struct_Comp"/>
</dbReference>
<dbReference type="InterPro" id="IPR001119">
    <property type="entry name" value="SLH_dom"/>
</dbReference>
<dbReference type="PANTHER" id="PTHR43308:SF1">
    <property type="entry name" value="OUTER MEMBRANE PROTEIN ALPHA"/>
    <property type="match status" value="1"/>
</dbReference>
<dbReference type="PANTHER" id="PTHR43308">
    <property type="entry name" value="OUTER MEMBRANE PROTEIN ALPHA-RELATED"/>
    <property type="match status" value="1"/>
</dbReference>
<dbReference type="Pfam" id="PF00395">
    <property type="entry name" value="SLH"/>
    <property type="match status" value="3"/>
</dbReference>
<dbReference type="PROSITE" id="PS51272">
    <property type="entry name" value="SLH"/>
    <property type="match status" value="3"/>
</dbReference>
<name>SLAP_BACLI</name>
<proteinExistence type="inferred from homology"/>
<sequence length="874" mass="92735">MAKTNSYKKVIAGTMTAAMVAGVVSPVAAAGKSFPDVPAGHWAEDSINYLVDKGAIVGKPDGTYGPTESIDRASAAVIFTKILNLPVDENAQPSFKDAKNLWSSKYIAAVEKAGVVKGDGKDNFYPEGKIDRASFASMLVGAYNLKEKVDGTLVTKFDDLRGHWGEEKANILVNLGISVGTGGKWEPNKSVSRAEAAQFIALTDKKYAKPENSDAKVTNVAATEPTQLTLTGTGLNKLTAEDVTLEGNKAIALEASKDGKSAVVTLSGKIAPNKELPVKVKGNTFIVKYVYEVKKLRVEQLTFDDDRADQAVVFKLNDEKGNADIEYLDIAGHDVKFVANNLDGTPANIFEGGTAESTTGKLAVGIAEGKYKVEVQVTKRGGITVSNTGIIEVKNLDAEATAIKDVVFAVDTDKAGVNYAKPLSGTDFTLNSKTLVAGEKAGIHKVVAQINKENKVVDPSAISLKSSNPGVISVKNGEIKAEAAGSATLTVKVGDVTKTFDFVVKTDTRKLTTVKANPDQLKVVDGKELPVTFVTTDQYGDPFGANSGAIKEVFPQTGVVKVLDVTTTNEGSIGTSSIKVKGENVGAGTIHFQNPNASGEGYGSLHVEVTKSNIGHEAPRLELVSKAGQKGEAADTTLGAGNTVAYQLSNYTTEGVYADAADLAGYEFRVGNDKIASAKIEGKTLKVTGKTAGVTDVILTKDGATAGHATITVTQENIQITSVKFKDVEVEQFENRKVNIDRVLDVVKSDKDDVLNGIKLNISTEHKVRIVDEGTEQGKVYLDRNDNATFDGNDVALGYVTAVKSNDTVSKEGNDLFKFLTDETATNKNDVFKGVTTAFGDKGTVIFKVMKDRVAPTTEYGTKAVTINVIKEEI</sequence>
<organism>
    <name type="scientific">Bacillus licheniformis</name>
    <dbReference type="NCBI Taxonomy" id="1402"/>
    <lineage>
        <taxon>Bacteria</taxon>
        <taxon>Bacillati</taxon>
        <taxon>Bacillota</taxon>
        <taxon>Bacilli</taxon>
        <taxon>Bacillales</taxon>
        <taxon>Bacillaceae</taxon>
        <taxon>Bacillus</taxon>
    </lineage>
</organism>
<keyword id="KW-0134">Cell wall</keyword>
<keyword id="KW-0677">Repeat</keyword>
<keyword id="KW-0701">S-layer</keyword>
<keyword id="KW-0964">Secreted</keyword>
<keyword id="KW-0732">Signal</keyword>
<accession>P49052</accession>
<feature type="signal peptide" evidence="1">
    <location>
        <begin position="1"/>
        <end position="30"/>
    </location>
</feature>
<feature type="chain" id="PRO_0000032630" description="S-layer protein">
    <location>
        <begin position="31"/>
        <end position="874"/>
    </location>
</feature>
<feature type="domain" description="SLH 1" evidence="2">
    <location>
        <begin position="31"/>
        <end position="93"/>
    </location>
</feature>
<feature type="domain" description="SLH 2" evidence="2">
    <location>
        <begin position="94"/>
        <end position="151"/>
    </location>
</feature>
<feature type="domain" description="SLH 3" evidence="2">
    <location>
        <begin position="152"/>
        <end position="214"/>
    </location>
</feature>
<evidence type="ECO:0000255" key="1"/>
<evidence type="ECO:0000255" key="2">
    <source>
        <dbReference type="PROSITE-ProRule" id="PRU00777"/>
    </source>
</evidence>